<evidence type="ECO:0000255" key="1">
    <source>
        <dbReference type="HAMAP-Rule" id="MF_00689"/>
    </source>
</evidence>
<keyword id="KW-0012">Acyltransferase</keyword>
<keyword id="KW-0963">Cytoplasm</keyword>
<keyword id="KW-0808">Transferase</keyword>
<proteinExistence type="inferred from homology"/>
<organism>
    <name type="scientific">Acidovorax sp. (strain JS42)</name>
    <dbReference type="NCBI Taxonomy" id="232721"/>
    <lineage>
        <taxon>Bacteria</taxon>
        <taxon>Pseudomonadati</taxon>
        <taxon>Pseudomonadota</taxon>
        <taxon>Betaproteobacteria</taxon>
        <taxon>Burkholderiales</taxon>
        <taxon>Comamonadaceae</taxon>
        <taxon>Acidovorax</taxon>
    </lineage>
</organism>
<gene>
    <name evidence="1" type="primary">bpt</name>
    <name type="ordered locus">Ajs_1987</name>
</gene>
<feature type="chain" id="PRO_1000045120" description="Aspartate/glutamate leucyltransferase">
    <location>
        <begin position="1"/>
        <end position="246"/>
    </location>
</feature>
<dbReference type="EC" id="2.3.2.29" evidence="1"/>
<dbReference type="EMBL" id="CP000539">
    <property type="protein sequence ID" value="ABM42163.1"/>
    <property type="molecule type" value="Genomic_DNA"/>
</dbReference>
<dbReference type="SMR" id="A1W7D8"/>
<dbReference type="STRING" id="232721.Ajs_1987"/>
<dbReference type="KEGG" id="ajs:Ajs_1987"/>
<dbReference type="eggNOG" id="COG2935">
    <property type="taxonomic scope" value="Bacteria"/>
</dbReference>
<dbReference type="HOGENOM" id="CLU_077607_0_0_4"/>
<dbReference type="Proteomes" id="UP000000645">
    <property type="component" value="Chromosome"/>
</dbReference>
<dbReference type="GO" id="GO:0005737">
    <property type="term" value="C:cytoplasm"/>
    <property type="evidence" value="ECO:0007669"/>
    <property type="project" value="UniProtKB-SubCell"/>
</dbReference>
<dbReference type="GO" id="GO:0004057">
    <property type="term" value="F:arginyl-tRNA--protein transferase activity"/>
    <property type="evidence" value="ECO:0007669"/>
    <property type="project" value="InterPro"/>
</dbReference>
<dbReference type="GO" id="GO:0008914">
    <property type="term" value="F:leucyl-tRNA--protein transferase activity"/>
    <property type="evidence" value="ECO:0007669"/>
    <property type="project" value="UniProtKB-UniRule"/>
</dbReference>
<dbReference type="GO" id="GO:0071596">
    <property type="term" value="P:ubiquitin-dependent protein catabolic process via the N-end rule pathway"/>
    <property type="evidence" value="ECO:0007669"/>
    <property type="project" value="InterPro"/>
</dbReference>
<dbReference type="HAMAP" id="MF_00689">
    <property type="entry name" value="Bpt"/>
    <property type="match status" value="1"/>
</dbReference>
<dbReference type="InterPro" id="IPR016181">
    <property type="entry name" value="Acyl_CoA_acyltransferase"/>
</dbReference>
<dbReference type="InterPro" id="IPR017138">
    <property type="entry name" value="Asp_Glu_LeuTrfase"/>
</dbReference>
<dbReference type="InterPro" id="IPR030700">
    <property type="entry name" value="N-end_Aminoacyl_Trfase"/>
</dbReference>
<dbReference type="InterPro" id="IPR007472">
    <property type="entry name" value="N-end_Aminoacyl_Trfase_C"/>
</dbReference>
<dbReference type="InterPro" id="IPR007471">
    <property type="entry name" value="N-end_Aminoacyl_Trfase_N"/>
</dbReference>
<dbReference type="NCBIfam" id="NF002341">
    <property type="entry name" value="PRK01305.1-1"/>
    <property type="match status" value="1"/>
</dbReference>
<dbReference type="NCBIfam" id="NF002342">
    <property type="entry name" value="PRK01305.1-3"/>
    <property type="match status" value="1"/>
</dbReference>
<dbReference type="NCBIfam" id="NF002346">
    <property type="entry name" value="PRK01305.2-3"/>
    <property type="match status" value="1"/>
</dbReference>
<dbReference type="PANTHER" id="PTHR21367">
    <property type="entry name" value="ARGININE-TRNA-PROTEIN TRANSFERASE 1"/>
    <property type="match status" value="1"/>
</dbReference>
<dbReference type="PANTHER" id="PTHR21367:SF1">
    <property type="entry name" value="ARGINYL-TRNA--PROTEIN TRANSFERASE 1"/>
    <property type="match status" value="1"/>
</dbReference>
<dbReference type="Pfam" id="PF04377">
    <property type="entry name" value="ATE_C"/>
    <property type="match status" value="1"/>
</dbReference>
<dbReference type="Pfam" id="PF04376">
    <property type="entry name" value="ATE_N"/>
    <property type="match status" value="1"/>
</dbReference>
<dbReference type="PIRSF" id="PIRSF037208">
    <property type="entry name" value="ATE_pro_prd"/>
    <property type="match status" value="1"/>
</dbReference>
<dbReference type="SUPFAM" id="SSF55729">
    <property type="entry name" value="Acyl-CoA N-acyltransferases (Nat)"/>
    <property type="match status" value="1"/>
</dbReference>
<accession>A1W7D8</accession>
<comment type="function">
    <text evidence="1">Functions in the N-end rule pathway of protein degradation where it conjugates Leu from its aminoacyl-tRNA to the N-termini of proteins containing an N-terminal aspartate or glutamate.</text>
</comment>
<comment type="catalytic activity">
    <reaction evidence="1">
        <text>N-terminal L-glutamyl-[protein] + L-leucyl-tRNA(Leu) = N-terminal L-leucyl-L-glutamyl-[protein] + tRNA(Leu) + H(+)</text>
        <dbReference type="Rhea" id="RHEA:50412"/>
        <dbReference type="Rhea" id="RHEA-COMP:9613"/>
        <dbReference type="Rhea" id="RHEA-COMP:9622"/>
        <dbReference type="Rhea" id="RHEA-COMP:12664"/>
        <dbReference type="Rhea" id="RHEA-COMP:12668"/>
        <dbReference type="ChEBI" id="CHEBI:15378"/>
        <dbReference type="ChEBI" id="CHEBI:64721"/>
        <dbReference type="ChEBI" id="CHEBI:78442"/>
        <dbReference type="ChEBI" id="CHEBI:78494"/>
        <dbReference type="ChEBI" id="CHEBI:133041"/>
        <dbReference type="EC" id="2.3.2.29"/>
    </reaction>
</comment>
<comment type="catalytic activity">
    <reaction evidence="1">
        <text>N-terminal L-aspartyl-[protein] + L-leucyl-tRNA(Leu) = N-terminal L-leucyl-L-aspartyl-[protein] + tRNA(Leu) + H(+)</text>
        <dbReference type="Rhea" id="RHEA:50420"/>
        <dbReference type="Rhea" id="RHEA-COMP:9613"/>
        <dbReference type="Rhea" id="RHEA-COMP:9622"/>
        <dbReference type="Rhea" id="RHEA-COMP:12669"/>
        <dbReference type="Rhea" id="RHEA-COMP:12674"/>
        <dbReference type="ChEBI" id="CHEBI:15378"/>
        <dbReference type="ChEBI" id="CHEBI:64720"/>
        <dbReference type="ChEBI" id="CHEBI:78442"/>
        <dbReference type="ChEBI" id="CHEBI:78494"/>
        <dbReference type="ChEBI" id="CHEBI:133042"/>
        <dbReference type="EC" id="2.3.2.29"/>
    </reaction>
</comment>
<comment type="subcellular location">
    <subcellularLocation>
        <location evidence="1">Cytoplasm</location>
    </subcellularLocation>
</comment>
<comment type="similarity">
    <text evidence="1">Belongs to the R-transferase family. Bpt subfamily.</text>
</comment>
<name>BPT_ACISJ</name>
<protein>
    <recommendedName>
        <fullName evidence="1">Aspartate/glutamate leucyltransferase</fullName>
        <ecNumber evidence="1">2.3.2.29</ecNumber>
    </recommendedName>
</protein>
<sequence length="246" mass="28470">MTQLNDLPLQSLQFYATAPYPCSYLPERQARSQVATPSHLIQNDVYSGLVARGFRRSGMFTYRPYCDGCQACTPLRVVVDPFKPDRSQRRAWKRHAGLQARVLRLCYLPEHYQLYLRYQNARHAGGGMDQDSIDQYTQFLLQSRVNSRLVEFRETGADGQPGTLKMVSILDVLEDGLSAVYTFYEPEPGASYGTYNVLWQVQQARTLGLPYVYLGYWIEQSPKMNYKARFMPHELRIDGRWQRSKS</sequence>
<reference key="1">
    <citation type="submission" date="2006-12" db="EMBL/GenBank/DDBJ databases">
        <title>Complete sequence of chromosome 1 of Acidovorax sp. JS42.</title>
        <authorList>
            <person name="Copeland A."/>
            <person name="Lucas S."/>
            <person name="Lapidus A."/>
            <person name="Barry K."/>
            <person name="Detter J.C."/>
            <person name="Glavina del Rio T."/>
            <person name="Dalin E."/>
            <person name="Tice H."/>
            <person name="Pitluck S."/>
            <person name="Chertkov O."/>
            <person name="Brettin T."/>
            <person name="Bruce D."/>
            <person name="Han C."/>
            <person name="Tapia R."/>
            <person name="Gilna P."/>
            <person name="Schmutz J."/>
            <person name="Larimer F."/>
            <person name="Land M."/>
            <person name="Hauser L."/>
            <person name="Kyrpides N."/>
            <person name="Kim E."/>
            <person name="Stahl D."/>
            <person name="Richardson P."/>
        </authorList>
    </citation>
    <scope>NUCLEOTIDE SEQUENCE [LARGE SCALE GENOMIC DNA]</scope>
    <source>
        <strain>JS42</strain>
    </source>
</reference>